<feature type="chain" id="PRO_0000113113" description="Aspartate carbamoyltransferase catalytic subunit">
    <location>
        <begin position="1"/>
        <end position="343"/>
    </location>
</feature>
<feature type="binding site" evidence="1">
    <location>
        <position position="91"/>
    </location>
    <ligand>
        <name>carbamoyl phosphate</name>
        <dbReference type="ChEBI" id="CHEBI:58228"/>
    </ligand>
</feature>
<feature type="binding site" evidence="1">
    <location>
        <position position="92"/>
    </location>
    <ligand>
        <name>carbamoyl phosphate</name>
        <dbReference type="ChEBI" id="CHEBI:58228"/>
    </ligand>
</feature>
<feature type="binding site" evidence="1">
    <location>
        <position position="119"/>
    </location>
    <ligand>
        <name>L-aspartate</name>
        <dbReference type="ChEBI" id="CHEBI:29991"/>
    </ligand>
</feature>
<feature type="binding site" evidence="1">
    <location>
        <position position="141"/>
    </location>
    <ligand>
        <name>carbamoyl phosphate</name>
        <dbReference type="ChEBI" id="CHEBI:58228"/>
    </ligand>
</feature>
<feature type="binding site" evidence="1">
    <location>
        <position position="171"/>
    </location>
    <ligand>
        <name>carbamoyl phosphate</name>
        <dbReference type="ChEBI" id="CHEBI:58228"/>
    </ligand>
</feature>
<feature type="binding site" evidence="1">
    <location>
        <position position="174"/>
    </location>
    <ligand>
        <name>carbamoyl phosphate</name>
        <dbReference type="ChEBI" id="CHEBI:58228"/>
    </ligand>
</feature>
<feature type="binding site" evidence="1">
    <location>
        <position position="204"/>
    </location>
    <ligand>
        <name>L-aspartate</name>
        <dbReference type="ChEBI" id="CHEBI:29991"/>
    </ligand>
</feature>
<feature type="binding site" evidence="1">
    <location>
        <position position="259"/>
    </location>
    <ligand>
        <name>L-aspartate</name>
        <dbReference type="ChEBI" id="CHEBI:29991"/>
    </ligand>
</feature>
<feature type="binding site" evidence="1">
    <location>
        <position position="300"/>
    </location>
    <ligand>
        <name>carbamoyl phosphate</name>
        <dbReference type="ChEBI" id="CHEBI:58228"/>
    </ligand>
</feature>
<feature type="binding site" evidence="1">
    <location>
        <position position="301"/>
    </location>
    <ligand>
        <name>carbamoyl phosphate</name>
        <dbReference type="ChEBI" id="CHEBI:58228"/>
    </ligand>
</feature>
<comment type="function">
    <text evidence="1">Catalyzes the condensation of carbamoyl phosphate and aspartate to form carbamoyl aspartate and inorganic phosphate, the committed step in the de novo pyrimidine nucleotide biosynthesis pathway.</text>
</comment>
<comment type="catalytic activity">
    <reaction evidence="1">
        <text>carbamoyl phosphate + L-aspartate = N-carbamoyl-L-aspartate + phosphate + H(+)</text>
        <dbReference type="Rhea" id="RHEA:20013"/>
        <dbReference type="ChEBI" id="CHEBI:15378"/>
        <dbReference type="ChEBI" id="CHEBI:29991"/>
        <dbReference type="ChEBI" id="CHEBI:32814"/>
        <dbReference type="ChEBI" id="CHEBI:43474"/>
        <dbReference type="ChEBI" id="CHEBI:58228"/>
        <dbReference type="EC" id="2.1.3.2"/>
    </reaction>
</comment>
<comment type="pathway">
    <text evidence="1">Pyrimidine metabolism; UMP biosynthesis via de novo pathway; (S)-dihydroorotate from bicarbonate: step 2/3.</text>
</comment>
<comment type="subunit">
    <text evidence="1">Heterododecamer (2C3:3R2) of six catalytic PyrB chains organized as two trimers (C3), and six regulatory PyrI chains organized as three dimers (R2).</text>
</comment>
<comment type="similarity">
    <text evidence="1">Belongs to the aspartate/ornithine carbamoyltransferase superfamily. ATCase family.</text>
</comment>
<gene>
    <name evidence="1" type="primary">pyrB</name>
    <name type="ordered locus">BPSL2690</name>
</gene>
<proteinExistence type="inferred from homology"/>
<name>PYRB_BURPS</name>
<sequence length="343" mass="37387">MTTDTSGRTGNPAAAAPAERFRYGFLKGNPQLTKNGELKHLLTIEGLPRAILNQILDTAEQFVSVTDREVKKVPLLRGKSVFNLFFENSTRTRTTFEIAAKRLSADVINLNINASSTSKGESLLDTINNLSAMHADLFVVRHASSGAPYLIAEHCAPHVHVINAGDGRHAHPTQGLLDMYTIRHYKRDFTKLRVAIVGDILHSRVARSDIHALTTLGVPEVRAIGPRTLLPGGLEQMGVRVFHNLDEGLRDVDVIIMLRLQNERMSGALLPSAQEYFKSWGLTPERLALAAPDAIVMHPGPMNRGVEIDSQVADGPQSVILNQVTFGIAVRMAVMGIVAGTSD</sequence>
<evidence type="ECO:0000255" key="1">
    <source>
        <dbReference type="HAMAP-Rule" id="MF_00001"/>
    </source>
</evidence>
<reference key="1">
    <citation type="journal article" date="2004" name="Proc. Natl. Acad. Sci. U.S.A.">
        <title>Genomic plasticity of the causative agent of melioidosis, Burkholderia pseudomallei.</title>
        <authorList>
            <person name="Holden M.T.G."/>
            <person name="Titball R.W."/>
            <person name="Peacock S.J."/>
            <person name="Cerdeno-Tarraga A.-M."/>
            <person name="Atkins T."/>
            <person name="Crossman L.C."/>
            <person name="Pitt T."/>
            <person name="Churcher C."/>
            <person name="Mungall K.L."/>
            <person name="Bentley S.D."/>
            <person name="Sebaihia M."/>
            <person name="Thomson N.R."/>
            <person name="Bason N."/>
            <person name="Beacham I.R."/>
            <person name="Brooks K."/>
            <person name="Brown K.A."/>
            <person name="Brown N.F."/>
            <person name="Challis G.L."/>
            <person name="Cherevach I."/>
            <person name="Chillingworth T."/>
            <person name="Cronin A."/>
            <person name="Crossett B."/>
            <person name="Davis P."/>
            <person name="DeShazer D."/>
            <person name="Feltwell T."/>
            <person name="Fraser A."/>
            <person name="Hance Z."/>
            <person name="Hauser H."/>
            <person name="Holroyd S."/>
            <person name="Jagels K."/>
            <person name="Keith K.E."/>
            <person name="Maddison M."/>
            <person name="Moule S."/>
            <person name="Price C."/>
            <person name="Quail M.A."/>
            <person name="Rabbinowitsch E."/>
            <person name="Rutherford K."/>
            <person name="Sanders M."/>
            <person name="Simmonds M."/>
            <person name="Songsivilai S."/>
            <person name="Stevens K."/>
            <person name="Tumapa S."/>
            <person name="Vesaratchavest M."/>
            <person name="Whitehead S."/>
            <person name="Yeats C."/>
            <person name="Barrell B.G."/>
            <person name="Oyston P.C.F."/>
            <person name="Parkhill J."/>
        </authorList>
    </citation>
    <scope>NUCLEOTIDE SEQUENCE [LARGE SCALE GENOMIC DNA]</scope>
    <source>
        <strain>K96243</strain>
    </source>
</reference>
<accession>Q63RI2</accession>
<organism>
    <name type="scientific">Burkholderia pseudomallei (strain K96243)</name>
    <dbReference type="NCBI Taxonomy" id="272560"/>
    <lineage>
        <taxon>Bacteria</taxon>
        <taxon>Pseudomonadati</taxon>
        <taxon>Pseudomonadota</taxon>
        <taxon>Betaproteobacteria</taxon>
        <taxon>Burkholderiales</taxon>
        <taxon>Burkholderiaceae</taxon>
        <taxon>Burkholderia</taxon>
        <taxon>pseudomallei group</taxon>
    </lineage>
</organism>
<keyword id="KW-0665">Pyrimidine biosynthesis</keyword>
<keyword id="KW-1185">Reference proteome</keyword>
<keyword id="KW-0808">Transferase</keyword>
<protein>
    <recommendedName>
        <fullName evidence="1">Aspartate carbamoyltransferase catalytic subunit</fullName>
        <ecNumber evidence="1">2.1.3.2</ecNumber>
    </recommendedName>
    <alternativeName>
        <fullName evidence="1">Aspartate transcarbamylase</fullName>
        <shortName evidence="1">ATCase</shortName>
    </alternativeName>
</protein>
<dbReference type="EC" id="2.1.3.2" evidence="1"/>
<dbReference type="EMBL" id="BX571965">
    <property type="protein sequence ID" value="CAH36698.1"/>
    <property type="molecule type" value="Genomic_DNA"/>
</dbReference>
<dbReference type="RefSeq" id="WP_004534003.1">
    <property type="nucleotide sequence ID" value="NZ_CP009538.1"/>
</dbReference>
<dbReference type="RefSeq" id="YP_109286.1">
    <property type="nucleotide sequence ID" value="NC_006350.1"/>
</dbReference>
<dbReference type="SMR" id="Q63RI2"/>
<dbReference type="STRING" id="272560.BPSL2690"/>
<dbReference type="KEGG" id="bps:BPSL2690"/>
<dbReference type="PATRIC" id="fig|272560.51.peg.2652"/>
<dbReference type="eggNOG" id="COG0540">
    <property type="taxonomic scope" value="Bacteria"/>
</dbReference>
<dbReference type="UniPathway" id="UPA00070">
    <property type="reaction ID" value="UER00116"/>
</dbReference>
<dbReference type="Proteomes" id="UP000000605">
    <property type="component" value="Chromosome 1"/>
</dbReference>
<dbReference type="GO" id="GO:0005829">
    <property type="term" value="C:cytosol"/>
    <property type="evidence" value="ECO:0007669"/>
    <property type="project" value="TreeGrafter"/>
</dbReference>
<dbReference type="GO" id="GO:0016597">
    <property type="term" value="F:amino acid binding"/>
    <property type="evidence" value="ECO:0007669"/>
    <property type="project" value="InterPro"/>
</dbReference>
<dbReference type="GO" id="GO:0004070">
    <property type="term" value="F:aspartate carbamoyltransferase activity"/>
    <property type="evidence" value="ECO:0007669"/>
    <property type="project" value="UniProtKB-UniRule"/>
</dbReference>
<dbReference type="GO" id="GO:0006207">
    <property type="term" value="P:'de novo' pyrimidine nucleobase biosynthetic process"/>
    <property type="evidence" value="ECO:0007669"/>
    <property type="project" value="InterPro"/>
</dbReference>
<dbReference type="GO" id="GO:0044205">
    <property type="term" value="P:'de novo' UMP biosynthetic process"/>
    <property type="evidence" value="ECO:0007669"/>
    <property type="project" value="UniProtKB-UniRule"/>
</dbReference>
<dbReference type="GO" id="GO:0006520">
    <property type="term" value="P:amino acid metabolic process"/>
    <property type="evidence" value="ECO:0007669"/>
    <property type="project" value="InterPro"/>
</dbReference>
<dbReference type="FunFam" id="3.40.50.1370:FF:000007">
    <property type="entry name" value="Aspartate carbamoyltransferase"/>
    <property type="match status" value="1"/>
</dbReference>
<dbReference type="Gene3D" id="3.40.50.1370">
    <property type="entry name" value="Aspartate/ornithine carbamoyltransferase"/>
    <property type="match status" value="2"/>
</dbReference>
<dbReference type="HAMAP" id="MF_00001">
    <property type="entry name" value="Asp_carb_tr"/>
    <property type="match status" value="1"/>
</dbReference>
<dbReference type="InterPro" id="IPR006132">
    <property type="entry name" value="Asp/Orn_carbamoyltranf_P-bd"/>
</dbReference>
<dbReference type="InterPro" id="IPR006130">
    <property type="entry name" value="Asp/Orn_carbamoylTrfase"/>
</dbReference>
<dbReference type="InterPro" id="IPR036901">
    <property type="entry name" value="Asp/Orn_carbamoylTrfase_sf"/>
</dbReference>
<dbReference type="InterPro" id="IPR002082">
    <property type="entry name" value="Asp_carbamoyltransf"/>
</dbReference>
<dbReference type="InterPro" id="IPR006131">
    <property type="entry name" value="Asp_carbamoyltransf_Asp/Orn-bd"/>
</dbReference>
<dbReference type="NCBIfam" id="TIGR00670">
    <property type="entry name" value="asp_carb_tr"/>
    <property type="match status" value="1"/>
</dbReference>
<dbReference type="NCBIfam" id="NF002032">
    <property type="entry name" value="PRK00856.1"/>
    <property type="match status" value="1"/>
</dbReference>
<dbReference type="PANTHER" id="PTHR45753:SF6">
    <property type="entry name" value="ASPARTATE CARBAMOYLTRANSFERASE"/>
    <property type="match status" value="1"/>
</dbReference>
<dbReference type="PANTHER" id="PTHR45753">
    <property type="entry name" value="ORNITHINE CARBAMOYLTRANSFERASE, MITOCHONDRIAL"/>
    <property type="match status" value="1"/>
</dbReference>
<dbReference type="Pfam" id="PF00185">
    <property type="entry name" value="OTCace"/>
    <property type="match status" value="1"/>
</dbReference>
<dbReference type="Pfam" id="PF02729">
    <property type="entry name" value="OTCace_N"/>
    <property type="match status" value="1"/>
</dbReference>
<dbReference type="PRINTS" id="PR00100">
    <property type="entry name" value="AOTCASE"/>
</dbReference>
<dbReference type="PRINTS" id="PR00101">
    <property type="entry name" value="ATCASE"/>
</dbReference>
<dbReference type="SUPFAM" id="SSF53671">
    <property type="entry name" value="Aspartate/ornithine carbamoyltransferase"/>
    <property type="match status" value="1"/>
</dbReference>
<dbReference type="PROSITE" id="PS00097">
    <property type="entry name" value="CARBAMOYLTRANSFERASE"/>
    <property type="match status" value="1"/>
</dbReference>